<feature type="chain" id="PRO_0000111384" description="Small ribosomal subunit protein uS9">
    <location>
        <begin position="1"/>
        <end position="130"/>
    </location>
</feature>
<evidence type="ECO:0000255" key="1">
    <source>
        <dbReference type="HAMAP-Rule" id="MF_00532"/>
    </source>
</evidence>
<evidence type="ECO:0000305" key="2"/>
<proteinExistence type="inferred from homology"/>
<dbReference type="EMBL" id="BA000028">
    <property type="protein sequence ID" value="BAC12108.1"/>
    <property type="molecule type" value="Genomic_DNA"/>
</dbReference>
<dbReference type="RefSeq" id="WP_011064553.1">
    <property type="nucleotide sequence ID" value="NC_004193.1"/>
</dbReference>
<dbReference type="SMR" id="Q8ETV3"/>
<dbReference type="STRING" id="221109.gene:10732342"/>
<dbReference type="KEGG" id="oih:OB0152"/>
<dbReference type="eggNOG" id="COG0103">
    <property type="taxonomic scope" value="Bacteria"/>
</dbReference>
<dbReference type="HOGENOM" id="CLU_046483_2_1_9"/>
<dbReference type="OrthoDB" id="9803965at2"/>
<dbReference type="PhylomeDB" id="Q8ETV3"/>
<dbReference type="Proteomes" id="UP000000822">
    <property type="component" value="Chromosome"/>
</dbReference>
<dbReference type="GO" id="GO:0022627">
    <property type="term" value="C:cytosolic small ribosomal subunit"/>
    <property type="evidence" value="ECO:0007669"/>
    <property type="project" value="TreeGrafter"/>
</dbReference>
<dbReference type="GO" id="GO:0003723">
    <property type="term" value="F:RNA binding"/>
    <property type="evidence" value="ECO:0007669"/>
    <property type="project" value="TreeGrafter"/>
</dbReference>
<dbReference type="GO" id="GO:0003735">
    <property type="term" value="F:structural constituent of ribosome"/>
    <property type="evidence" value="ECO:0007669"/>
    <property type="project" value="InterPro"/>
</dbReference>
<dbReference type="GO" id="GO:0006412">
    <property type="term" value="P:translation"/>
    <property type="evidence" value="ECO:0007669"/>
    <property type="project" value="UniProtKB-UniRule"/>
</dbReference>
<dbReference type="FunFam" id="3.30.230.10:FF:000001">
    <property type="entry name" value="30S ribosomal protein S9"/>
    <property type="match status" value="1"/>
</dbReference>
<dbReference type="Gene3D" id="3.30.230.10">
    <property type="match status" value="1"/>
</dbReference>
<dbReference type="HAMAP" id="MF_00532_B">
    <property type="entry name" value="Ribosomal_uS9_B"/>
    <property type="match status" value="1"/>
</dbReference>
<dbReference type="InterPro" id="IPR020568">
    <property type="entry name" value="Ribosomal_Su5_D2-typ_SF"/>
</dbReference>
<dbReference type="InterPro" id="IPR000754">
    <property type="entry name" value="Ribosomal_uS9"/>
</dbReference>
<dbReference type="InterPro" id="IPR023035">
    <property type="entry name" value="Ribosomal_uS9_bac/plastid"/>
</dbReference>
<dbReference type="InterPro" id="IPR020574">
    <property type="entry name" value="Ribosomal_uS9_CS"/>
</dbReference>
<dbReference type="InterPro" id="IPR014721">
    <property type="entry name" value="Ribsml_uS5_D2-typ_fold_subgr"/>
</dbReference>
<dbReference type="NCBIfam" id="NF001099">
    <property type="entry name" value="PRK00132.1"/>
    <property type="match status" value="1"/>
</dbReference>
<dbReference type="PANTHER" id="PTHR21569">
    <property type="entry name" value="RIBOSOMAL PROTEIN S9"/>
    <property type="match status" value="1"/>
</dbReference>
<dbReference type="PANTHER" id="PTHR21569:SF1">
    <property type="entry name" value="SMALL RIBOSOMAL SUBUNIT PROTEIN US9M"/>
    <property type="match status" value="1"/>
</dbReference>
<dbReference type="Pfam" id="PF00380">
    <property type="entry name" value="Ribosomal_S9"/>
    <property type="match status" value="1"/>
</dbReference>
<dbReference type="SUPFAM" id="SSF54211">
    <property type="entry name" value="Ribosomal protein S5 domain 2-like"/>
    <property type="match status" value="1"/>
</dbReference>
<dbReference type="PROSITE" id="PS00360">
    <property type="entry name" value="RIBOSOMAL_S9"/>
    <property type="match status" value="1"/>
</dbReference>
<comment type="similarity">
    <text evidence="1">Belongs to the universal ribosomal protein uS9 family.</text>
</comment>
<protein>
    <recommendedName>
        <fullName evidence="1">Small ribosomal subunit protein uS9</fullName>
    </recommendedName>
    <alternativeName>
        <fullName evidence="2">30S ribosomal protein S9</fullName>
    </alternativeName>
</protein>
<accession>Q8ETV3</accession>
<gene>
    <name evidence="1" type="primary">rpsI</name>
    <name type="ordered locus">OB0152</name>
</gene>
<name>RS9_OCEIH</name>
<organism>
    <name type="scientific">Oceanobacillus iheyensis (strain DSM 14371 / CIP 107618 / JCM 11309 / KCTC 3954 / HTE831)</name>
    <dbReference type="NCBI Taxonomy" id="221109"/>
    <lineage>
        <taxon>Bacteria</taxon>
        <taxon>Bacillati</taxon>
        <taxon>Bacillota</taxon>
        <taxon>Bacilli</taxon>
        <taxon>Bacillales</taxon>
        <taxon>Bacillaceae</taxon>
        <taxon>Oceanobacillus</taxon>
    </lineage>
</organism>
<sequence>MAQVQYYGTGRRKKSTARVRLVPGTGNVTINGRDAQDYFPYETQLLILNQPLAATETQGTYDVLVNVDGGGFTGQAGAIRHGIARALLQADPEYRSTLKSEGYLTRDARMKERKKYGLKKARRAPQFSKR</sequence>
<reference key="1">
    <citation type="journal article" date="2002" name="Nucleic Acids Res.">
        <title>Genome sequence of Oceanobacillus iheyensis isolated from the Iheya Ridge and its unexpected adaptive capabilities to extreme environments.</title>
        <authorList>
            <person name="Takami H."/>
            <person name="Takaki Y."/>
            <person name="Uchiyama I."/>
        </authorList>
    </citation>
    <scope>NUCLEOTIDE SEQUENCE [LARGE SCALE GENOMIC DNA]</scope>
    <source>
        <strain>DSM 14371 / CIP 107618 / JCM 11309 / KCTC 3954 / HTE831</strain>
    </source>
</reference>
<keyword id="KW-1185">Reference proteome</keyword>
<keyword id="KW-0687">Ribonucleoprotein</keyword>
<keyword id="KW-0689">Ribosomal protein</keyword>